<accession>C3TS10</accession>
<comment type="function">
    <text evidence="3">Voltage-gated sodium channel (Nav) inhibitor. 1 uM completely inhibits insect voltage-gated sodium channel inactivation (DmNav1 from D.melanogaster).</text>
</comment>
<comment type="subcellular location">
    <subcellularLocation>
        <location evidence="6">Secreted</location>
    </subcellularLocation>
    <subcellularLocation>
        <location evidence="6">Nematocyst</location>
    </subcellularLocation>
</comment>
<comment type="similarity">
    <text evidence="6">Belongs to the sea anemone short toxin (type III) family.</text>
</comment>
<comment type="caution">
    <text evidence="6">Opinions are divided on whether Anemonia viridis (Forsskal, 1775) and Anemonia sulcata (Pennant, 1777) are separate species.</text>
</comment>
<evidence type="ECO:0000250" key="1">
    <source>
        <dbReference type="UniProtKB" id="P01535"/>
    </source>
</evidence>
<evidence type="ECO:0000255" key="2"/>
<evidence type="ECO:0000269" key="3">
    <source>
    </source>
</evidence>
<evidence type="ECO:0000303" key="4">
    <source>
    </source>
</evidence>
<evidence type="ECO:0000303" key="5">
    <source>
    </source>
</evidence>
<evidence type="ECO:0000305" key="6"/>
<evidence type="ECO:0000312" key="7">
    <source>
        <dbReference type="EMBL" id="ACL12308.1"/>
    </source>
</evidence>
<dbReference type="EMBL" id="EU919733">
    <property type="protein sequence ID" value="ACL12308.1"/>
    <property type="molecule type" value="mRNA"/>
</dbReference>
<dbReference type="GO" id="GO:0005576">
    <property type="term" value="C:extracellular region"/>
    <property type="evidence" value="ECO:0007669"/>
    <property type="project" value="UniProtKB-SubCell"/>
</dbReference>
<dbReference type="GO" id="GO:0042151">
    <property type="term" value="C:nematocyst"/>
    <property type="evidence" value="ECO:0007669"/>
    <property type="project" value="UniProtKB-SubCell"/>
</dbReference>
<dbReference type="GO" id="GO:0019871">
    <property type="term" value="F:sodium channel inhibitor activity"/>
    <property type="evidence" value="ECO:0007669"/>
    <property type="project" value="InterPro"/>
</dbReference>
<dbReference type="GO" id="GO:0090729">
    <property type="term" value="F:toxin activity"/>
    <property type="evidence" value="ECO:0007669"/>
    <property type="project" value="UniProtKB-KW"/>
</dbReference>
<dbReference type="InterPro" id="IPR012509">
    <property type="entry name" value="Neurotoxin_3_Anemonia"/>
</dbReference>
<dbReference type="InterPro" id="IPR036247">
    <property type="entry name" value="Neurotoxin_3_sf"/>
</dbReference>
<dbReference type="Pfam" id="PF08098">
    <property type="entry name" value="ATX_III"/>
    <property type="match status" value="1"/>
</dbReference>
<dbReference type="SUPFAM" id="SSF57419">
    <property type="entry name" value="Neurotoxin III (ATX III)"/>
    <property type="match status" value="1"/>
</dbReference>
<sequence length="72" mass="7928">MMSRLLVFLMLGAAFMLVVSANDAYGDEPAFKDLNQGDESLGKRKSCCPCWLRGNCFWGQNCYPEGCSGPKV</sequence>
<proteinExistence type="inferred from homology"/>
<reference key="1">
    <citation type="journal article" date="2009" name="J. Mol. Evol.">
        <title>Fusion and retrotransposition events in the evolution of the sea anemone Anemonia viridis neurotoxin genes.</title>
        <authorList>
            <person name="Moran Y."/>
            <person name="Weinberger H."/>
            <person name="Lazarus N."/>
            <person name="Gur M."/>
            <person name="Kahn R."/>
            <person name="Gordon D."/>
            <person name="Gurevitz M."/>
        </authorList>
    </citation>
    <scope>NUCLEOTIDE SEQUENCE [MRNA]</scope>
    <scope>FUNCTION</scope>
    <source>
        <tissue>Ovary</tissue>
    </source>
</reference>
<reference key="2">
    <citation type="journal article" date="2012" name="Toxicon">
        <title>Development of a rational nomenclature for naming peptide and protein toxins from sea anemones.</title>
        <authorList>
            <person name="Oliveira J.S."/>
            <person name="Fuentes-Silva D."/>
            <person name="King G.F."/>
        </authorList>
    </citation>
    <scope>NOMENCLATURE</scope>
</reference>
<protein>
    <recommendedName>
        <fullName evidence="5">Delta-actitoxin-Avd2b 3</fullName>
        <shortName evidence="5">Delta-AITX-Avd2b 3</shortName>
    </recommendedName>
    <alternativeName>
        <fullName evidence="4">Av7</fullName>
    </alternativeName>
    <alternativeName>
        <fullName evidence="7">Neurotoxin 7</fullName>
    </alternativeName>
</protein>
<name>STX73_ANEVI</name>
<keyword id="KW-1015">Disulfide bond</keyword>
<keyword id="KW-0872">Ion channel impairing toxin</keyword>
<keyword id="KW-0166">Nematocyst</keyword>
<keyword id="KW-0528">Neurotoxin</keyword>
<keyword id="KW-0964">Secreted</keyword>
<keyword id="KW-0732">Signal</keyword>
<keyword id="KW-0800">Toxin</keyword>
<keyword id="KW-0738">Voltage-gated sodium channel impairing toxin</keyword>
<feature type="signal peptide" evidence="2">
    <location>
        <begin position="1"/>
        <end position="21"/>
    </location>
</feature>
<feature type="propeptide" id="PRO_0000433695" evidence="1">
    <location>
        <begin position="22"/>
        <end position="42"/>
    </location>
</feature>
<feature type="peptide" id="PRO_5000461223" description="Delta-actitoxin-Avd2b 3">
    <location>
        <begin position="45"/>
        <end position="72"/>
    </location>
</feature>
<feature type="disulfide bond" evidence="1">
    <location>
        <begin position="47"/>
        <end position="62"/>
    </location>
</feature>
<feature type="disulfide bond" evidence="1">
    <location>
        <begin position="48"/>
        <end position="56"/>
    </location>
</feature>
<feature type="disulfide bond" evidence="1">
    <location>
        <begin position="50"/>
        <end position="67"/>
    </location>
</feature>
<organism>
    <name type="scientific">Anemonia viridis</name>
    <name type="common">Snakelocks anemone</name>
    <dbReference type="NCBI Taxonomy" id="51769"/>
    <lineage>
        <taxon>Eukaryota</taxon>
        <taxon>Metazoa</taxon>
        <taxon>Cnidaria</taxon>
        <taxon>Anthozoa</taxon>
        <taxon>Hexacorallia</taxon>
        <taxon>Actiniaria</taxon>
        <taxon>Actiniidae</taxon>
        <taxon>Anemonia</taxon>
    </lineage>
</organism>